<reference key="1">
    <citation type="journal article" date="1990" name="J. Virol.">
        <title>Evolution of influenza A virus PB2 genes: implications for evolution of the ribonucleoprotein complex and origin of human influenza A virus.</title>
        <authorList>
            <person name="Gorman O.T."/>
            <person name="Donis R.O."/>
            <person name="Kawaoka Y."/>
            <person name="Webster R.G."/>
        </authorList>
    </citation>
    <scope>NUCLEOTIDE SEQUENCE [GENOMIC RNA]</scope>
</reference>
<keyword id="KW-1157">Cap snatching</keyword>
<keyword id="KW-1262">Eukaryotic host gene expression shutoff by virus</keyword>
<keyword id="KW-1191">Eukaryotic host transcription shutoff by virus</keyword>
<keyword id="KW-1190">Host gene expression shutoff by virus</keyword>
<keyword id="KW-1048">Host nucleus</keyword>
<keyword id="KW-0945">Host-virus interaction</keyword>
<keyword id="KW-1104">Inhibition of host RNA polymerase II by virus</keyword>
<keyword id="KW-0506">mRNA capping</keyword>
<keyword id="KW-0507">mRNA processing</keyword>
<keyword id="KW-1195">Viral transcription</keyword>
<keyword id="KW-0946">Virion</keyword>
<sequence length="759" mass="85908">MERIKELRDLMSQSRTREILTKTTVDHMAIIKKYTSGRQEKNPALRMKWMMAMKYPITADKRIMEMIPERNEQGQTLWSKTNDAGSDRVMVSPLAVTWWNRNGPTTSTIHYPKVYKTYFEKVERLKHGTFGPVHFRNQVKIRRRVDINPGHADLSAKEAQDVIMEVVFPNEVGARILTSESQLTITKEKKEELQDCKIAPLMVAYMLERELVRKTRFLPVAGGTSSVYIEVLHLTQGTCWEQMYTPGGEVRNDDVDQSLIIAARNIVRRATVSADPLASLLEMCHSTQIGGTRMVDILKQNPTEEQAVDICKAAMGLRISSSFSFGGFTFKRTSGSSVKREEEVLTGNLQTLKIRVHEGYEEFTMVGRRATAILRKATRRLIQLIVSGRDEQSIAEAIIVAMVFSQEDCMIKAVRGDLNFVNRANQRLNPMHQLLRHFQKGAEVLFQNWGIEPIDNVMGMIGILPDMTPSTEMSLRGVRVSKMGVDEYSSTERVVVSIDRFLRVRDQRGNVLLSPEEVSETQGTEKLTIIYSSSMMWEINGPESVLVNTYQWIIRNWEIVKIQWSQDPTMLYNKMEFEPFQSLVPRATRGQYSGFVRTLFQQMRDVLGTFDTAQIIKLLPFAAAPPEQSRMQFSSLTVNVRGSGMRILVRGNSPVFNYNKATKRLTVLGKDAGALTEDPDEGTAGVESAVLRGFLILGKENKRYGPALSINELSNLTKGEKANVLIGQGDVVLVMKRKRDSSILTDSQTATKRIRMAIN</sequence>
<name>PB2_I73A4</name>
<feature type="chain" id="PRO_0000078822" description="Polymerase basic protein 2">
    <location>
        <begin position="1"/>
        <end position="759"/>
    </location>
</feature>
<feature type="short sequence motif" description="Nuclear localization signal" evidence="1">
    <location>
        <begin position="736"/>
        <end position="739"/>
    </location>
</feature>
<feature type="site" description="Avian adaptation" evidence="1">
    <location>
        <position position="627"/>
    </location>
</feature>
<organismHost>
    <name type="scientific">Aves</name>
    <dbReference type="NCBI Taxonomy" id="8782"/>
</organismHost>
<organismHost>
    <name type="scientific">Equus caballus</name>
    <name type="common">Horse</name>
    <dbReference type="NCBI Taxonomy" id="9796"/>
</organismHost>
<organismHost>
    <name type="scientific">Homo sapiens</name>
    <name type="common">Human</name>
    <dbReference type="NCBI Taxonomy" id="9606"/>
</organismHost>
<organismHost>
    <name type="scientific">Phocidae</name>
    <name type="common">true seals</name>
    <dbReference type="NCBI Taxonomy" id="9709"/>
</organismHost>
<dbReference type="EMBL" id="M73520">
    <property type="protein sequence ID" value="AAA43141.1"/>
    <property type="molecule type" value="Genomic_RNA"/>
</dbReference>
<dbReference type="SMR" id="P26106"/>
<dbReference type="GO" id="GO:0042025">
    <property type="term" value="C:host cell nucleus"/>
    <property type="evidence" value="ECO:0007669"/>
    <property type="project" value="UniProtKB-SubCell"/>
</dbReference>
<dbReference type="GO" id="GO:0044423">
    <property type="term" value="C:virion component"/>
    <property type="evidence" value="ECO:0007669"/>
    <property type="project" value="UniProtKB-UniRule"/>
</dbReference>
<dbReference type="GO" id="GO:0003723">
    <property type="term" value="F:RNA binding"/>
    <property type="evidence" value="ECO:0007669"/>
    <property type="project" value="UniProtKB-UniRule"/>
</dbReference>
<dbReference type="GO" id="GO:0003968">
    <property type="term" value="F:RNA-directed RNA polymerase activity"/>
    <property type="evidence" value="ECO:0007669"/>
    <property type="project" value="UniProtKB-UniRule"/>
</dbReference>
<dbReference type="GO" id="GO:0006370">
    <property type="term" value="P:7-methylguanosine mRNA capping"/>
    <property type="evidence" value="ECO:0007669"/>
    <property type="project" value="UniProtKB-UniRule"/>
</dbReference>
<dbReference type="GO" id="GO:0075526">
    <property type="term" value="P:cap snatching"/>
    <property type="evidence" value="ECO:0007669"/>
    <property type="project" value="UniProtKB-UniRule"/>
</dbReference>
<dbReference type="GO" id="GO:0006351">
    <property type="term" value="P:DNA-templated transcription"/>
    <property type="evidence" value="ECO:0007669"/>
    <property type="project" value="UniProtKB-UniRule"/>
</dbReference>
<dbReference type="GO" id="GO:0039657">
    <property type="term" value="P:symbiont-mediated suppression of host gene expression"/>
    <property type="evidence" value="ECO:0007669"/>
    <property type="project" value="UniProtKB-KW"/>
</dbReference>
<dbReference type="GO" id="GO:0039523">
    <property type="term" value="P:symbiont-mediated suppression of host mRNA transcription via inhibition of RNA polymerase II activity"/>
    <property type="evidence" value="ECO:0007669"/>
    <property type="project" value="UniProtKB-UniRule"/>
</dbReference>
<dbReference type="GO" id="GO:0039694">
    <property type="term" value="P:viral RNA genome replication"/>
    <property type="evidence" value="ECO:0007669"/>
    <property type="project" value="InterPro"/>
</dbReference>
<dbReference type="FunFam" id="3.30.30.90:FF:000001">
    <property type="entry name" value="Polymerase basic protein 2"/>
    <property type="match status" value="1"/>
</dbReference>
<dbReference type="Gene3D" id="3.30.30.90">
    <property type="entry name" value="Polymerase Basic Protein 2, C-terminal domain"/>
    <property type="match status" value="1"/>
</dbReference>
<dbReference type="HAMAP" id="MF_04062">
    <property type="entry name" value="INV_PB2"/>
    <property type="match status" value="1"/>
</dbReference>
<dbReference type="InterPro" id="IPR049110">
    <property type="entry name" value="Flu_PB2_2nd"/>
</dbReference>
<dbReference type="InterPro" id="IPR049114">
    <property type="entry name" value="Flu_PB2_6th"/>
</dbReference>
<dbReference type="InterPro" id="IPR049115">
    <property type="entry name" value="Flu_PB2_C"/>
</dbReference>
<dbReference type="InterPro" id="IPR048298">
    <property type="entry name" value="Flu_PB2_CAP-bd"/>
</dbReference>
<dbReference type="InterPro" id="IPR049111">
    <property type="entry name" value="Flu_PB2_middle"/>
</dbReference>
<dbReference type="InterPro" id="IPR049106">
    <property type="entry name" value="Flu_PB2_N"/>
</dbReference>
<dbReference type="InterPro" id="IPR001591">
    <property type="entry name" value="INV_PB2"/>
</dbReference>
<dbReference type="InterPro" id="IPR049113">
    <property type="entry name" value="PB2_helical"/>
</dbReference>
<dbReference type="InterPro" id="IPR037258">
    <property type="entry name" value="PDB2_C"/>
</dbReference>
<dbReference type="Pfam" id="PF20947">
    <property type="entry name" value="Flu_PB2_1st"/>
    <property type="match status" value="1"/>
</dbReference>
<dbReference type="Pfam" id="PF20948">
    <property type="entry name" value="Flu_PB2_2nd"/>
    <property type="match status" value="1"/>
</dbReference>
<dbReference type="Pfam" id="PF20949">
    <property type="entry name" value="Flu_PB2_3rd"/>
    <property type="match status" value="1"/>
</dbReference>
<dbReference type="Pfam" id="PF20950">
    <property type="entry name" value="Flu_PB2_4th"/>
    <property type="match status" value="1"/>
</dbReference>
<dbReference type="Pfam" id="PF00604">
    <property type="entry name" value="Flu_PB2_5th"/>
    <property type="match status" value="1"/>
</dbReference>
<dbReference type="Pfam" id="PF20951">
    <property type="entry name" value="Flu_PB2_6th"/>
    <property type="match status" value="1"/>
</dbReference>
<dbReference type="Pfam" id="PF20952">
    <property type="entry name" value="Flu_PB2_7th"/>
    <property type="match status" value="1"/>
</dbReference>
<dbReference type="SUPFAM" id="SSF160453">
    <property type="entry name" value="PB2 C-terminal domain-like"/>
    <property type="match status" value="1"/>
</dbReference>
<evidence type="ECO:0000255" key="1">
    <source>
        <dbReference type="HAMAP-Rule" id="MF_04062"/>
    </source>
</evidence>
<proteinExistence type="inferred from homology"/>
<protein>
    <recommendedName>
        <fullName evidence="1">Polymerase basic protein 2</fullName>
    </recommendedName>
    <alternativeName>
        <fullName evidence="1">RNA-directed RNA polymerase subunit P3</fullName>
    </alternativeName>
</protein>
<accession>P26106</accession>
<organism>
    <name type="scientific">Influenza A virus (strain A/Equine/London/1416/1973 H7N7)</name>
    <dbReference type="NCBI Taxonomy" id="380340"/>
    <lineage>
        <taxon>Viruses</taxon>
        <taxon>Riboviria</taxon>
        <taxon>Orthornavirae</taxon>
        <taxon>Negarnaviricota</taxon>
        <taxon>Polyploviricotina</taxon>
        <taxon>Insthoviricetes</taxon>
        <taxon>Articulavirales</taxon>
        <taxon>Orthomyxoviridae</taxon>
        <taxon>Alphainfluenzavirus</taxon>
        <taxon>Alphainfluenzavirus influenzae</taxon>
        <taxon>Influenza A virus</taxon>
    </lineage>
</organism>
<gene>
    <name evidence="1" type="primary">PB2</name>
</gene>
<comment type="function">
    <text evidence="1">Plays an essential role in transcription initiation and cap-stealing mechanism, in which cellular capped pre-mRNAs are used to generate primers for viral transcription. Recognizes and binds the 7-methylguanosine-containing cap of the target pre-RNA which is subsequently cleaved after 10-13 nucleotides by the viral protein PA. Plays a role in the initiation of the viral genome replication and modulates the activity of the ribonucleoprotein (RNP) complex.</text>
</comment>
<comment type="subunit">
    <text evidence="1">Influenza RNA polymerase is composed of three subunits: PB1, PB2 and PA. Interacts (via N-terminus) with PB1 (via C-terminus). Interacts with nucleoprotein NP (via N-terminus).</text>
</comment>
<comment type="subcellular location">
    <subcellularLocation>
        <location evidence="1">Virion</location>
    </subcellularLocation>
    <subcellularLocation>
        <location evidence="1">Host nucleus</location>
    </subcellularLocation>
</comment>
<comment type="similarity">
    <text evidence="1">Belongs to the influenza viruses PB2 family.</text>
</comment>